<name>CPP1_ACRMI</name>
<comment type="subcellular location">
    <subcellularLocation>
        <location evidence="7">Secreted</location>
    </subcellularLocation>
</comment>
<comment type="tissue specificity">
    <text evidence="4">Component of the acid-insoluble organic matrix of the aragonitic skeleton (at protein level).</text>
</comment>
<comment type="similarity">
    <text evidence="3">Belongs to the peptidase S1 family.</text>
</comment>
<sequence length="435" mass="47906">SGFHLSFSFFRRAVCGIRPTLSGFIVGGTVAPINSWPWQAKLRIAGNFLCGGSLIQPEWVLTAAHCVEGESPSIIKVTLGAHYLSTAQVVGTEQYFDVVQIIQHENYKMPKRFSNDVALLKLSRPAALRNGVGLVCLSDDQFQRPFNGTSCWTTGWGRLSWPGPVAKELMQVDLPLVSPQNCLSSYPNGYDPNTMICAGRSQGGTGACRGDSGGPLVCEFKGKWYLEGVTSWGQLPCDLPNKPTVYADVRKLKSWITGKISRSPALKVATNCSSVLNNTLKSPGYPDSYPINMFCVYRVPIPCDTELVIHFNSFHLENHVFCWYDRLRITDGSNRVIGTYCGQQTGRSVLVNDTVAVLTFKTDRSLNSSGFHLSFSFFPRGNATLLPFTTPTQTTTQRPTTTPTPGCGVVQNNTLRSPGYPSNYPRNTHCVYRVF</sequence>
<proteinExistence type="evidence at protein level"/>
<evidence type="ECO:0000255" key="1"/>
<evidence type="ECO:0000255" key="2">
    <source>
        <dbReference type="PROSITE-ProRule" id="PRU00059"/>
    </source>
</evidence>
<evidence type="ECO:0000255" key="3">
    <source>
        <dbReference type="PROSITE-ProRule" id="PRU00274"/>
    </source>
</evidence>
<evidence type="ECO:0000269" key="4">
    <source>
    </source>
</evidence>
<evidence type="ECO:0000303" key="5">
    <source>
    </source>
</evidence>
<evidence type="ECO:0000305" key="6"/>
<evidence type="ECO:0000305" key="7">
    <source>
    </source>
</evidence>
<protein>
    <recommendedName>
        <fullName evidence="5">CUB and peptidase domain-containing protein 1</fullName>
    </recommendedName>
</protein>
<keyword id="KW-0903">Direct protein sequencing</keyword>
<keyword id="KW-1015">Disulfide bond</keyword>
<keyword id="KW-0378">Hydrolase</keyword>
<keyword id="KW-0645">Protease</keyword>
<keyword id="KW-0964">Secreted</keyword>
<keyword id="KW-0720">Serine protease</keyword>
<keyword id="KW-0732">Signal</keyword>
<organism>
    <name type="scientific">Acropora millepora</name>
    <name type="common">Staghorn coral</name>
    <name type="synonym">Heteropora millepora</name>
    <dbReference type="NCBI Taxonomy" id="45264"/>
    <lineage>
        <taxon>Eukaryota</taxon>
        <taxon>Metazoa</taxon>
        <taxon>Cnidaria</taxon>
        <taxon>Anthozoa</taxon>
        <taxon>Hexacorallia</taxon>
        <taxon>Scleractinia</taxon>
        <taxon>Astrocoeniina</taxon>
        <taxon>Acroporidae</taxon>
        <taxon>Acropora</taxon>
    </lineage>
</organism>
<reference evidence="6" key="1">
    <citation type="journal article" date="2012" name="Mol. Ecol.">
        <title>Whole transcriptome analysis of the coral Acropora millepora reveals complex responses to CO(2)-driven acidification during the initiation of calcification.</title>
        <authorList>
            <person name="Moya A."/>
            <person name="Huisman L."/>
            <person name="Ball E.E."/>
            <person name="Hayward D.C."/>
            <person name="Grasso L.C."/>
            <person name="Chua C.M."/>
            <person name="Woo H.N."/>
            <person name="Gattuso J.P."/>
            <person name="Foret S."/>
            <person name="Miller D.J."/>
        </authorList>
    </citation>
    <scope>NUCLEOTIDE SEQUENCE [MRNA]</scope>
</reference>
<reference evidence="6" key="2">
    <citation type="journal article" date="2013" name="Mol. Biol. Evol.">
        <title>The skeletal proteome of the coral Acropora millepora: the evolution of calcification by co-option and domain shuffling.</title>
        <authorList>
            <person name="Ramos-Silva P."/>
            <person name="Kaandorp J."/>
            <person name="Huisman L."/>
            <person name="Marie B."/>
            <person name="Zanella-Cleon I."/>
            <person name="Guichard N."/>
            <person name="Miller D.J."/>
            <person name="Marin F."/>
        </authorList>
    </citation>
    <scope>PROTEIN SEQUENCE OF 112-122; 158-168; 209-222 AND 335-348</scope>
    <scope>TISSUE SPECIFICITY</scope>
    <scope>IDENTIFICATION BY MASS SPECTROMETRY</scope>
</reference>
<feature type="signal peptide" evidence="1">
    <location>
        <begin position="1" status="less than"/>
        <end position="16"/>
    </location>
</feature>
<feature type="chain" id="PRO_0000429495" description="CUB and peptidase domain-containing protein 1" evidence="1">
    <location>
        <begin position="17"/>
        <end position="435" status="greater than"/>
    </location>
</feature>
<feature type="domain" description="Peptidase S1" evidence="3">
    <location>
        <begin position="25"/>
        <end position="261"/>
    </location>
</feature>
<feature type="domain" description="CUB" evidence="2">
    <location>
        <begin position="256"/>
        <end position="378"/>
    </location>
</feature>
<feature type="active site" description="Charge relay system" evidence="1">
    <location>
        <position position="65"/>
    </location>
</feature>
<feature type="active site" description="Charge relay system" evidence="1">
    <location>
        <position position="116"/>
    </location>
</feature>
<feature type="active site" description="Charge relay system" evidence="1">
    <location>
        <position position="212"/>
    </location>
</feature>
<feature type="disulfide bond" evidence="1">
    <location>
        <begin position="50"/>
        <end position="66"/>
    </location>
</feature>
<feature type="disulfide bond" evidence="1">
    <location>
        <begin position="151"/>
        <end position="218"/>
    </location>
</feature>
<feature type="disulfide bond" evidence="1">
    <location>
        <begin position="182"/>
        <end position="197"/>
    </location>
</feature>
<feature type="disulfide bond" evidence="1">
    <location>
        <begin position="208"/>
        <end position="237"/>
    </location>
</feature>
<feature type="disulfide bond" evidence="1">
    <location>
        <begin position="322"/>
        <end position="341"/>
    </location>
</feature>
<feature type="non-terminal residue" evidence="6">
    <location>
        <position position="1"/>
    </location>
</feature>
<feature type="non-terminal residue" evidence="6">
    <location>
        <position position="435"/>
    </location>
</feature>
<accession>B8V7S0</accession>
<dbReference type="EMBL" id="JR970990">
    <property type="status" value="NOT_ANNOTATED_CDS"/>
    <property type="molecule type" value="mRNA"/>
</dbReference>
<dbReference type="SMR" id="B8V7S0"/>
<dbReference type="OrthoDB" id="5958853at2759"/>
<dbReference type="GO" id="GO:0005576">
    <property type="term" value="C:extracellular region"/>
    <property type="evidence" value="ECO:0007669"/>
    <property type="project" value="UniProtKB-SubCell"/>
</dbReference>
<dbReference type="GO" id="GO:0004252">
    <property type="term" value="F:serine-type endopeptidase activity"/>
    <property type="evidence" value="ECO:0007669"/>
    <property type="project" value="InterPro"/>
</dbReference>
<dbReference type="GO" id="GO:0006508">
    <property type="term" value="P:proteolysis"/>
    <property type="evidence" value="ECO:0007669"/>
    <property type="project" value="UniProtKB-KW"/>
</dbReference>
<dbReference type="CDD" id="cd00041">
    <property type="entry name" value="CUB"/>
    <property type="match status" value="1"/>
</dbReference>
<dbReference type="CDD" id="cd00190">
    <property type="entry name" value="Tryp_SPc"/>
    <property type="match status" value="1"/>
</dbReference>
<dbReference type="FunFam" id="2.40.10.10:FF:000077">
    <property type="entry name" value="Predicted protein"/>
    <property type="match status" value="1"/>
</dbReference>
<dbReference type="FunFam" id="2.60.120.290:FF:000005">
    <property type="entry name" value="Procollagen C-endopeptidase enhancer 1"/>
    <property type="match status" value="1"/>
</dbReference>
<dbReference type="Gene3D" id="2.60.120.290">
    <property type="entry name" value="Spermadhesin, CUB domain"/>
    <property type="match status" value="1"/>
</dbReference>
<dbReference type="Gene3D" id="2.40.10.10">
    <property type="entry name" value="Trypsin-like serine proteases"/>
    <property type="match status" value="1"/>
</dbReference>
<dbReference type="InterPro" id="IPR000859">
    <property type="entry name" value="CUB_dom"/>
</dbReference>
<dbReference type="InterPro" id="IPR009003">
    <property type="entry name" value="Peptidase_S1_PA"/>
</dbReference>
<dbReference type="InterPro" id="IPR043504">
    <property type="entry name" value="Peptidase_S1_PA_chymotrypsin"/>
</dbReference>
<dbReference type="InterPro" id="IPR001314">
    <property type="entry name" value="Peptidase_S1A"/>
</dbReference>
<dbReference type="InterPro" id="IPR035914">
    <property type="entry name" value="Sperma_CUB_dom_sf"/>
</dbReference>
<dbReference type="InterPro" id="IPR001254">
    <property type="entry name" value="Trypsin_dom"/>
</dbReference>
<dbReference type="InterPro" id="IPR018114">
    <property type="entry name" value="TRYPSIN_HIS"/>
</dbReference>
<dbReference type="InterPro" id="IPR033116">
    <property type="entry name" value="TRYPSIN_SER"/>
</dbReference>
<dbReference type="PANTHER" id="PTHR24252">
    <property type="entry name" value="ACROSIN-RELATED"/>
    <property type="match status" value="1"/>
</dbReference>
<dbReference type="PANTHER" id="PTHR24252:SF7">
    <property type="entry name" value="HYALIN"/>
    <property type="match status" value="1"/>
</dbReference>
<dbReference type="Pfam" id="PF00431">
    <property type="entry name" value="CUB"/>
    <property type="match status" value="1"/>
</dbReference>
<dbReference type="Pfam" id="PF00089">
    <property type="entry name" value="Trypsin"/>
    <property type="match status" value="1"/>
</dbReference>
<dbReference type="PRINTS" id="PR00722">
    <property type="entry name" value="CHYMOTRYPSIN"/>
</dbReference>
<dbReference type="SMART" id="SM00042">
    <property type="entry name" value="CUB"/>
    <property type="match status" value="1"/>
</dbReference>
<dbReference type="SMART" id="SM00020">
    <property type="entry name" value="Tryp_SPc"/>
    <property type="match status" value="1"/>
</dbReference>
<dbReference type="SUPFAM" id="SSF49854">
    <property type="entry name" value="Spermadhesin, CUB domain"/>
    <property type="match status" value="2"/>
</dbReference>
<dbReference type="SUPFAM" id="SSF50494">
    <property type="entry name" value="Trypsin-like serine proteases"/>
    <property type="match status" value="1"/>
</dbReference>
<dbReference type="PROSITE" id="PS01180">
    <property type="entry name" value="CUB"/>
    <property type="match status" value="1"/>
</dbReference>
<dbReference type="PROSITE" id="PS50240">
    <property type="entry name" value="TRYPSIN_DOM"/>
    <property type="match status" value="1"/>
</dbReference>
<dbReference type="PROSITE" id="PS00134">
    <property type="entry name" value="TRYPSIN_HIS"/>
    <property type="match status" value="1"/>
</dbReference>
<dbReference type="PROSITE" id="PS00135">
    <property type="entry name" value="TRYPSIN_SER"/>
    <property type="match status" value="1"/>
</dbReference>